<protein>
    <recommendedName>
        <fullName evidence="1">Large ribosomal subunit protein bL19</fullName>
    </recommendedName>
    <alternativeName>
        <fullName evidence="2">50S ribosomal protein L19</fullName>
    </alternativeName>
</protein>
<evidence type="ECO:0000255" key="1">
    <source>
        <dbReference type="HAMAP-Rule" id="MF_00402"/>
    </source>
</evidence>
<evidence type="ECO:0000305" key="2"/>
<sequence length="114" mass="13167">MQQLIAEITKGQLKTDLPSFRPGDTLRVHVKVVEGTRERIQLFEGVVIKRRGGGISETFTVRKISYGVGVERTFPVHTPRIAKIEVLRRGKVRRAKLYYLRNLRGKKARIKEIR</sequence>
<accession>Q81WJ6</accession>
<accession>Q6HUP6</accession>
<accession>Q6KNX9</accession>
<comment type="function">
    <text evidence="1">This protein is located at the 30S-50S ribosomal subunit interface and may play a role in the structure and function of the aminoacyl-tRNA binding site.</text>
</comment>
<comment type="similarity">
    <text evidence="1">Belongs to the bacterial ribosomal protein bL19 family.</text>
</comment>
<organism>
    <name type="scientific">Bacillus anthracis</name>
    <dbReference type="NCBI Taxonomy" id="1392"/>
    <lineage>
        <taxon>Bacteria</taxon>
        <taxon>Bacillati</taxon>
        <taxon>Bacillota</taxon>
        <taxon>Bacilli</taxon>
        <taxon>Bacillales</taxon>
        <taxon>Bacillaceae</taxon>
        <taxon>Bacillus</taxon>
        <taxon>Bacillus cereus group</taxon>
    </lineage>
</organism>
<keyword id="KW-1185">Reference proteome</keyword>
<keyword id="KW-0687">Ribonucleoprotein</keyword>
<keyword id="KW-0689">Ribosomal protein</keyword>
<reference key="1">
    <citation type="journal article" date="2003" name="Nature">
        <title>The genome sequence of Bacillus anthracis Ames and comparison to closely related bacteria.</title>
        <authorList>
            <person name="Read T.D."/>
            <person name="Peterson S.N."/>
            <person name="Tourasse N.J."/>
            <person name="Baillie L.W."/>
            <person name="Paulsen I.T."/>
            <person name="Nelson K.E."/>
            <person name="Tettelin H."/>
            <person name="Fouts D.E."/>
            <person name="Eisen J.A."/>
            <person name="Gill S.R."/>
            <person name="Holtzapple E.K."/>
            <person name="Okstad O.A."/>
            <person name="Helgason E."/>
            <person name="Rilstone J."/>
            <person name="Wu M."/>
            <person name="Kolonay J.F."/>
            <person name="Beanan M.J."/>
            <person name="Dodson R.J."/>
            <person name="Brinkac L.M."/>
            <person name="Gwinn M.L."/>
            <person name="DeBoy R.T."/>
            <person name="Madpu R."/>
            <person name="Daugherty S.C."/>
            <person name="Durkin A.S."/>
            <person name="Haft D.H."/>
            <person name="Nelson W.C."/>
            <person name="Peterson J.D."/>
            <person name="Pop M."/>
            <person name="Khouri H.M."/>
            <person name="Radune D."/>
            <person name="Benton J.L."/>
            <person name="Mahamoud Y."/>
            <person name="Jiang L."/>
            <person name="Hance I.R."/>
            <person name="Weidman J.F."/>
            <person name="Berry K.J."/>
            <person name="Plaut R.D."/>
            <person name="Wolf A.M."/>
            <person name="Watkins K.L."/>
            <person name="Nierman W.C."/>
            <person name="Hazen A."/>
            <person name="Cline R.T."/>
            <person name="Redmond C."/>
            <person name="Thwaite J.E."/>
            <person name="White O."/>
            <person name="Salzberg S.L."/>
            <person name="Thomason B."/>
            <person name="Friedlander A.M."/>
            <person name="Koehler T.M."/>
            <person name="Hanna P.C."/>
            <person name="Kolstoe A.-B."/>
            <person name="Fraser C.M."/>
        </authorList>
    </citation>
    <scope>NUCLEOTIDE SEQUENCE [LARGE SCALE GENOMIC DNA]</scope>
    <source>
        <strain>Ames / isolate Porton</strain>
    </source>
</reference>
<reference key="2">
    <citation type="journal article" date="2009" name="J. Bacteriol.">
        <title>The complete genome sequence of Bacillus anthracis Ames 'Ancestor'.</title>
        <authorList>
            <person name="Ravel J."/>
            <person name="Jiang L."/>
            <person name="Stanley S.T."/>
            <person name="Wilson M.R."/>
            <person name="Decker R.S."/>
            <person name="Read T.D."/>
            <person name="Worsham P."/>
            <person name="Keim P.S."/>
            <person name="Salzberg S.L."/>
            <person name="Fraser-Liggett C.M."/>
            <person name="Rasko D.A."/>
        </authorList>
    </citation>
    <scope>NUCLEOTIDE SEQUENCE [LARGE SCALE GENOMIC DNA]</scope>
    <source>
        <strain>Ames ancestor</strain>
    </source>
</reference>
<reference key="3">
    <citation type="submission" date="2004-01" db="EMBL/GenBank/DDBJ databases">
        <title>Complete genome sequence of Bacillus anthracis Sterne.</title>
        <authorList>
            <person name="Brettin T.S."/>
            <person name="Bruce D."/>
            <person name="Challacombe J.F."/>
            <person name="Gilna P."/>
            <person name="Han C."/>
            <person name="Hill K."/>
            <person name="Hitchcock P."/>
            <person name="Jackson P."/>
            <person name="Keim P."/>
            <person name="Longmire J."/>
            <person name="Lucas S."/>
            <person name="Okinaka R."/>
            <person name="Richardson P."/>
            <person name="Rubin E."/>
            <person name="Tice H."/>
        </authorList>
    </citation>
    <scope>NUCLEOTIDE SEQUENCE [LARGE SCALE GENOMIC DNA]</scope>
    <source>
        <strain>Sterne</strain>
    </source>
</reference>
<gene>
    <name evidence="1" type="primary">rplS</name>
    <name type="ordered locus">BA_3978</name>
    <name type="ordered locus">GBAA_3978</name>
    <name type="ordered locus">BAS3691</name>
</gene>
<feature type="chain" id="PRO_0000163403" description="Large ribosomal subunit protein bL19">
    <location>
        <begin position="1"/>
        <end position="114"/>
    </location>
</feature>
<proteinExistence type="inferred from homology"/>
<name>RL19_BACAN</name>
<dbReference type="EMBL" id="AE016879">
    <property type="protein sequence ID" value="AAP27706.1"/>
    <property type="molecule type" value="Genomic_DNA"/>
</dbReference>
<dbReference type="EMBL" id="AE017334">
    <property type="protein sequence ID" value="AAT33092.1"/>
    <property type="molecule type" value="Genomic_DNA"/>
</dbReference>
<dbReference type="EMBL" id="AE017225">
    <property type="protein sequence ID" value="AAT55993.1"/>
    <property type="molecule type" value="Genomic_DNA"/>
</dbReference>
<dbReference type="RefSeq" id="NP_846220.1">
    <property type="nucleotide sequence ID" value="NC_003997.3"/>
</dbReference>
<dbReference type="RefSeq" id="WP_001186516.1">
    <property type="nucleotide sequence ID" value="NZ_WXXJ01000026.1"/>
</dbReference>
<dbReference type="RefSeq" id="YP_029942.1">
    <property type="nucleotide sequence ID" value="NC_005945.1"/>
</dbReference>
<dbReference type="SMR" id="Q81WJ6"/>
<dbReference type="STRING" id="261594.GBAA_3978"/>
<dbReference type="DNASU" id="1086794"/>
<dbReference type="GeneID" id="93007272"/>
<dbReference type="KEGG" id="ban:BA_3978"/>
<dbReference type="KEGG" id="bar:GBAA_3978"/>
<dbReference type="KEGG" id="bat:BAS3691"/>
<dbReference type="PATRIC" id="fig|198094.11.peg.3948"/>
<dbReference type="eggNOG" id="COG0335">
    <property type="taxonomic scope" value="Bacteria"/>
</dbReference>
<dbReference type="HOGENOM" id="CLU_103507_2_1_9"/>
<dbReference type="OMA" id="TITVYYE"/>
<dbReference type="OrthoDB" id="9803541at2"/>
<dbReference type="Proteomes" id="UP000000427">
    <property type="component" value="Chromosome"/>
</dbReference>
<dbReference type="Proteomes" id="UP000000594">
    <property type="component" value="Chromosome"/>
</dbReference>
<dbReference type="GO" id="GO:0022625">
    <property type="term" value="C:cytosolic large ribosomal subunit"/>
    <property type="evidence" value="ECO:0007669"/>
    <property type="project" value="TreeGrafter"/>
</dbReference>
<dbReference type="GO" id="GO:0003735">
    <property type="term" value="F:structural constituent of ribosome"/>
    <property type="evidence" value="ECO:0007669"/>
    <property type="project" value="InterPro"/>
</dbReference>
<dbReference type="GO" id="GO:0006412">
    <property type="term" value="P:translation"/>
    <property type="evidence" value="ECO:0007669"/>
    <property type="project" value="UniProtKB-UniRule"/>
</dbReference>
<dbReference type="FunFam" id="2.30.30.790:FF:000001">
    <property type="entry name" value="50S ribosomal protein L19"/>
    <property type="match status" value="1"/>
</dbReference>
<dbReference type="Gene3D" id="2.30.30.790">
    <property type="match status" value="1"/>
</dbReference>
<dbReference type="HAMAP" id="MF_00402">
    <property type="entry name" value="Ribosomal_bL19"/>
    <property type="match status" value="1"/>
</dbReference>
<dbReference type="InterPro" id="IPR001857">
    <property type="entry name" value="Ribosomal_bL19"/>
</dbReference>
<dbReference type="InterPro" id="IPR018257">
    <property type="entry name" value="Ribosomal_bL19_CS"/>
</dbReference>
<dbReference type="InterPro" id="IPR038657">
    <property type="entry name" value="Ribosomal_bL19_sf"/>
</dbReference>
<dbReference type="InterPro" id="IPR008991">
    <property type="entry name" value="Translation_prot_SH3-like_sf"/>
</dbReference>
<dbReference type="NCBIfam" id="TIGR01024">
    <property type="entry name" value="rplS_bact"/>
    <property type="match status" value="1"/>
</dbReference>
<dbReference type="PANTHER" id="PTHR15680:SF9">
    <property type="entry name" value="LARGE RIBOSOMAL SUBUNIT PROTEIN BL19M"/>
    <property type="match status" value="1"/>
</dbReference>
<dbReference type="PANTHER" id="PTHR15680">
    <property type="entry name" value="RIBOSOMAL PROTEIN L19"/>
    <property type="match status" value="1"/>
</dbReference>
<dbReference type="Pfam" id="PF01245">
    <property type="entry name" value="Ribosomal_L19"/>
    <property type="match status" value="1"/>
</dbReference>
<dbReference type="PIRSF" id="PIRSF002191">
    <property type="entry name" value="Ribosomal_L19"/>
    <property type="match status" value="1"/>
</dbReference>
<dbReference type="PRINTS" id="PR00061">
    <property type="entry name" value="RIBOSOMALL19"/>
</dbReference>
<dbReference type="SUPFAM" id="SSF50104">
    <property type="entry name" value="Translation proteins SH3-like domain"/>
    <property type="match status" value="1"/>
</dbReference>
<dbReference type="PROSITE" id="PS01015">
    <property type="entry name" value="RIBOSOMAL_L19"/>
    <property type="match status" value="1"/>
</dbReference>